<dbReference type="EMBL" id="BA000004">
    <property type="protein sequence ID" value="BAB06363.1"/>
    <property type="molecule type" value="Genomic_DNA"/>
</dbReference>
<dbReference type="PIR" id="D83980">
    <property type="entry name" value="D83980"/>
</dbReference>
<dbReference type="SMR" id="Q9K9K2"/>
<dbReference type="STRING" id="272558.gene:10728542"/>
<dbReference type="KEGG" id="bha:BH2644"/>
<dbReference type="eggNOG" id="COG4129">
    <property type="taxonomic scope" value="Bacteria"/>
</dbReference>
<dbReference type="HOGENOM" id="CLU_067028_0_0_9"/>
<dbReference type="OrthoDB" id="2690036at2"/>
<dbReference type="Proteomes" id="UP000001258">
    <property type="component" value="Chromosome"/>
</dbReference>
<dbReference type="GO" id="GO:0005886">
    <property type="term" value="C:plasma membrane"/>
    <property type="evidence" value="ECO:0007669"/>
    <property type="project" value="UniProtKB-SubCell"/>
</dbReference>
<dbReference type="InterPro" id="IPR010343">
    <property type="entry name" value="ArAE_1"/>
</dbReference>
<dbReference type="Pfam" id="PF06081">
    <property type="entry name" value="ArAE_1"/>
    <property type="match status" value="1"/>
</dbReference>
<gene>
    <name type="ordered locus">BH2644</name>
</gene>
<organism>
    <name type="scientific">Halalkalibacterium halodurans (strain ATCC BAA-125 / DSM 18197 / FERM 7344 / JCM 9153 / C-125)</name>
    <name type="common">Bacillus halodurans</name>
    <dbReference type="NCBI Taxonomy" id="272558"/>
    <lineage>
        <taxon>Bacteria</taxon>
        <taxon>Bacillati</taxon>
        <taxon>Bacillota</taxon>
        <taxon>Bacilli</taxon>
        <taxon>Bacillales</taxon>
        <taxon>Bacillaceae</taxon>
        <taxon>Halalkalibacterium (ex Joshi et al. 2022)</taxon>
    </lineage>
</organism>
<feature type="chain" id="PRO_0000283010" description="UPF0421 protein BH2644">
    <location>
        <begin position="1"/>
        <end position="354"/>
    </location>
</feature>
<feature type="transmembrane region" description="Helical" evidence="1">
    <location>
        <begin position="22"/>
        <end position="42"/>
    </location>
</feature>
<feature type="transmembrane region" description="Helical" evidence="1">
    <location>
        <begin position="60"/>
        <end position="80"/>
    </location>
</feature>
<feature type="transmembrane region" description="Helical" evidence="1">
    <location>
        <begin position="107"/>
        <end position="127"/>
    </location>
</feature>
<feature type="transmembrane region" description="Helical" evidence="1">
    <location>
        <begin position="133"/>
        <end position="153"/>
    </location>
</feature>
<evidence type="ECO:0000255" key="1"/>
<evidence type="ECO:0000305" key="2"/>
<comment type="subcellular location">
    <subcellularLocation>
        <location evidence="2">Cell membrane</location>
        <topology evidence="2">Multi-pass membrane protein</topology>
    </subcellularLocation>
</comment>
<comment type="similarity">
    <text evidence="2">Belongs to the UPF0421 family.</text>
</comment>
<sequence>MEISGFMKHPWIGRRVLKTGLAVCLTTAICMAFNLSPTFAVISAIVTTEPTAADSLKKGLIRLPAAALGAFFAVLSAYFFGQTPITYAIVSMITIAVCARLRLDAGTLVATLTAVAMIPSTTDHLFADYVSRVAGTSLGIMISTFVNFMILPPKFGPILMNKVEKMFAMLSSELKLVTTKVVDFEKEETMTSYRTLHHHLSETYKLTTFQHDEWKYRKSSSSEKRSFTYLHRKLDYVYKALAHLGKIGQIRLKKPLSVKERQLVLSFLVSLTNILQDPLHQIHTEHYALARQLEDAMHKKKDATEPIHRLLSELISLHDLTVELEQCTADERRFSLEERAYPSYIFLERLRPSD</sequence>
<keyword id="KW-1003">Cell membrane</keyword>
<keyword id="KW-0472">Membrane</keyword>
<keyword id="KW-1185">Reference proteome</keyword>
<keyword id="KW-0812">Transmembrane</keyword>
<keyword id="KW-1133">Transmembrane helix</keyword>
<reference key="1">
    <citation type="journal article" date="2000" name="Nucleic Acids Res.">
        <title>Complete genome sequence of the alkaliphilic bacterium Bacillus halodurans and genomic sequence comparison with Bacillus subtilis.</title>
        <authorList>
            <person name="Takami H."/>
            <person name="Nakasone K."/>
            <person name="Takaki Y."/>
            <person name="Maeno G."/>
            <person name="Sasaki R."/>
            <person name="Masui N."/>
            <person name="Fuji F."/>
            <person name="Hirama C."/>
            <person name="Nakamura Y."/>
            <person name="Ogasawara N."/>
            <person name="Kuhara S."/>
            <person name="Horikoshi K."/>
        </authorList>
    </citation>
    <scope>NUCLEOTIDE SEQUENCE [LARGE SCALE GENOMIC DNA]</scope>
    <source>
        <strain>ATCC BAA-125 / DSM 18197 / FERM 7344 / JCM 9153 / C-125</strain>
    </source>
</reference>
<protein>
    <recommendedName>
        <fullName>UPF0421 protein BH2644</fullName>
    </recommendedName>
</protein>
<name>Y2644_HALH5</name>
<proteinExistence type="inferred from homology"/>
<accession>Q9K9K2</accession>